<feature type="chain" id="PRO_0000323725" description="Protein DPCD">
    <location>
        <begin position="1"/>
        <end position="203"/>
    </location>
</feature>
<feature type="splice variant" id="VSP_032083" description="In isoform 2." evidence="2">
    <original>MAVTSWLEILRSAEKTALLQDGKRMVHYLFPDGKEMAEEYDEKTSELLVRKWRVKNALGALGQWQLEVGEPMPSGAGSLGSELIKESNAN</original>
    <variation>MPWEPWASGSSKWENQCPQELGAWDPSSSRK</variation>
    <location>
        <begin position="1"/>
        <end position="90"/>
    </location>
</feature>
<keyword id="KW-0025">Alternative splicing</keyword>
<keyword id="KW-1185">Reference proteome</keyword>
<reference key="1">
    <citation type="journal article" date="2004" name="Nature">
        <title>Genome sequence of the Brown Norway rat yields insights into mammalian evolution.</title>
        <authorList>
            <person name="Gibbs R.A."/>
            <person name="Weinstock G.M."/>
            <person name="Metzker M.L."/>
            <person name="Muzny D.M."/>
            <person name="Sodergren E.J."/>
            <person name="Scherer S."/>
            <person name="Scott G."/>
            <person name="Steffen D."/>
            <person name="Worley K.C."/>
            <person name="Burch P.E."/>
            <person name="Okwuonu G."/>
            <person name="Hines S."/>
            <person name="Lewis L."/>
            <person name="Deramo C."/>
            <person name="Delgado O."/>
            <person name="Dugan-Rocha S."/>
            <person name="Miner G."/>
            <person name="Morgan M."/>
            <person name="Hawes A."/>
            <person name="Gill R."/>
            <person name="Holt R.A."/>
            <person name="Adams M.D."/>
            <person name="Amanatides P.G."/>
            <person name="Baden-Tillson H."/>
            <person name="Barnstead M."/>
            <person name="Chin S."/>
            <person name="Evans C.A."/>
            <person name="Ferriera S."/>
            <person name="Fosler C."/>
            <person name="Glodek A."/>
            <person name="Gu Z."/>
            <person name="Jennings D."/>
            <person name="Kraft C.L."/>
            <person name="Nguyen T."/>
            <person name="Pfannkoch C.M."/>
            <person name="Sitter C."/>
            <person name="Sutton G.G."/>
            <person name="Venter J.C."/>
            <person name="Woodage T."/>
            <person name="Smith D."/>
            <person name="Lee H.-M."/>
            <person name="Gustafson E."/>
            <person name="Cahill P."/>
            <person name="Kana A."/>
            <person name="Doucette-Stamm L."/>
            <person name="Weinstock K."/>
            <person name="Fechtel K."/>
            <person name="Weiss R.B."/>
            <person name="Dunn D.M."/>
            <person name="Green E.D."/>
            <person name="Blakesley R.W."/>
            <person name="Bouffard G.G."/>
            <person name="De Jong P.J."/>
            <person name="Osoegawa K."/>
            <person name="Zhu B."/>
            <person name="Marra M."/>
            <person name="Schein J."/>
            <person name="Bosdet I."/>
            <person name="Fjell C."/>
            <person name="Jones S."/>
            <person name="Krzywinski M."/>
            <person name="Mathewson C."/>
            <person name="Siddiqui A."/>
            <person name="Wye N."/>
            <person name="McPherson J."/>
            <person name="Zhao S."/>
            <person name="Fraser C.M."/>
            <person name="Shetty J."/>
            <person name="Shatsman S."/>
            <person name="Geer K."/>
            <person name="Chen Y."/>
            <person name="Abramzon S."/>
            <person name="Nierman W.C."/>
            <person name="Havlak P.H."/>
            <person name="Chen R."/>
            <person name="Durbin K.J."/>
            <person name="Egan A."/>
            <person name="Ren Y."/>
            <person name="Song X.-Z."/>
            <person name="Li B."/>
            <person name="Liu Y."/>
            <person name="Qin X."/>
            <person name="Cawley S."/>
            <person name="Cooney A.J."/>
            <person name="D'Souza L.M."/>
            <person name="Martin K."/>
            <person name="Wu J.Q."/>
            <person name="Gonzalez-Garay M.L."/>
            <person name="Jackson A.R."/>
            <person name="Kalafus K.J."/>
            <person name="McLeod M.P."/>
            <person name="Milosavljevic A."/>
            <person name="Virk D."/>
            <person name="Volkov A."/>
            <person name="Wheeler D.A."/>
            <person name="Zhang Z."/>
            <person name="Bailey J.A."/>
            <person name="Eichler E.E."/>
            <person name="Tuzun E."/>
            <person name="Birney E."/>
            <person name="Mongin E."/>
            <person name="Ureta-Vidal A."/>
            <person name="Woodwark C."/>
            <person name="Zdobnov E."/>
            <person name="Bork P."/>
            <person name="Suyama M."/>
            <person name="Torrents D."/>
            <person name="Alexandersson M."/>
            <person name="Trask B.J."/>
            <person name="Young J.M."/>
            <person name="Huang H."/>
            <person name="Wang H."/>
            <person name="Xing H."/>
            <person name="Daniels S."/>
            <person name="Gietzen D."/>
            <person name="Schmidt J."/>
            <person name="Stevens K."/>
            <person name="Vitt U."/>
            <person name="Wingrove J."/>
            <person name="Camara F."/>
            <person name="Mar Alba M."/>
            <person name="Abril J.F."/>
            <person name="Guigo R."/>
            <person name="Smit A."/>
            <person name="Dubchak I."/>
            <person name="Rubin E.M."/>
            <person name="Couronne O."/>
            <person name="Poliakov A."/>
            <person name="Huebner N."/>
            <person name="Ganten D."/>
            <person name="Goesele C."/>
            <person name="Hummel O."/>
            <person name="Kreitler T."/>
            <person name="Lee Y.-A."/>
            <person name="Monti J."/>
            <person name="Schulz H."/>
            <person name="Zimdahl H."/>
            <person name="Himmelbauer H."/>
            <person name="Lehrach H."/>
            <person name="Jacob H.J."/>
            <person name="Bromberg S."/>
            <person name="Gullings-Handley J."/>
            <person name="Jensen-Seaman M.I."/>
            <person name="Kwitek A.E."/>
            <person name="Lazar J."/>
            <person name="Pasko D."/>
            <person name="Tonellato P.J."/>
            <person name="Twigger S."/>
            <person name="Ponting C.P."/>
            <person name="Duarte J.M."/>
            <person name="Rice S."/>
            <person name="Goodstadt L."/>
            <person name="Beatson S.A."/>
            <person name="Emes R.D."/>
            <person name="Winter E.E."/>
            <person name="Webber C."/>
            <person name="Brandt P."/>
            <person name="Nyakatura G."/>
            <person name="Adetobi M."/>
            <person name="Chiaromonte F."/>
            <person name="Elnitski L."/>
            <person name="Eswara P."/>
            <person name="Hardison R.C."/>
            <person name="Hou M."/>
            <person name="Kolbe D."/>
            <person name="Makova K."/>
            <person name="Miller W."/>
            <person name="Nekrutenko A."/>
            <person name="Riemer C."/>
            <person name="Schwartz S."/>
            <person name="Taylor J."/>
            <person name="Yang S."/>
            <person name="Zhang Y."/>
            <person name="Lindpaintner K."/>
            <person name="Andrews T.D."/>
            <person name="Caccamo M."/>
            <person name="Clamp M."/>
            <person name="Clarke L."/>
            <person name="Curwen V."/>
            <person name="Durbin R.M."/>
            <person name="Eyras E."/>
            <person name="Searle S.M."/>
            <person name="Cooper G.M."/>
            <person name="Batzoglou S."/>
            <person name="Brudno M."/>
            <person name="Sidow A."/>
            <person name="Stone E.A."/>
            <person name="Payseur B.A."/>
            <person name="Bourque G."/>
            <person name="Lopez-Otin C."/>
            <person name="Puente X.S."/>
            <person name="Chakrabarti K."/>
            <person name="Chatterji S."/>
            <person name="Dewey C."/>
            <person name="Pachter L."/>
            <person name="Bray N."/>
            <person name="Yap V.B."/>
            <person name="Caspi A."/>
            <person name="Tesler G."/>
            <person name="Pevzner P.A."/>
            <person name="Haussler D."/>
            <person name="Roskin K.M."/>
            <person name="Baertsch R."/>
            <person name="Clawson H."/>
            <person name="Furey T.S."/>
            <person name="Hinrichs A.S."/>
            <person name="Karolchik D."/>
            <person name="Kent W.J."/>
            <person name="Rosenbloom K.R."/>
            <person name="Trumbower H."/>
            <person name="Weirauch M."/>
            <person name="Cooper D.N."/>
            <person name="Stenson P.D."/>
            <person name="Ma B."/>
            <person name="Brent M."/>
            <person name="Arumugam M."/>
            <person name="Shteynberg D."/>
            <person name="Copley R.R."/>
            <person name="Taylor M.S."/>
            <person name="Riethman H."/>
            <person name="Mudunuri U."/>
            <person name="Peterson J."/>
            <person name="Guyer M."/>
            <person name="Felsenfeld A."/>
            <person name="Old S."/>
            <person name="Mockrin S."/>
            <person name="Collins F.S."/>
        </authorList>
    </citation>
    <scope>NUCLEOTIDE SEQUENCE [LARGE SCALE GENOMIC DNA]</scope>
    <source>
        <strain>Brown Norway</strain>
    </source>
</reference>
<reference key="2">
    <citation type="journal article" date="2004" name="Genome Res.">
        <title>The status, quality, and expansion of the NIH full-length cDNA project: the Mammalian Gene Collection (MGC).</title>
        <authorList>
            <consortium name="The MGC Project Team"/>
        </authorList>
    </citation>
    <scope>NUCLEOTIDE SEQUENCE [LARGE SCALE MRNA] (ISOFORM 2)</scope>
    <source>
        <tissue>Testis</tissue>
    </source>
</reference>
<organism>
    <name type="scientific">Rattus norvegicus</name>
    <name type="common">Rat</name>
    <dbReference type="NCBI Taxonomy" id="10116"/>
    <lineage>
        <taxon>Eukaryota</taxon>
        <taxon>Metazoa</taxon>
        <taxon>Chordata</taxon>
        <taxon>Craniata</taxon>
        <taxon>Vertebrata</taxon>
        <taxon>Euteleostomi</taxon>
        <taxon>Mammalia</taxon>
        <taxon>Eutheria</taxon>
        <taxon>Euarchontoglires</taxon>
        <taxon>Glires</taxon>
        <taxon>Rodentia</taxon>
        <taxon>Myomorpha</taxon>
        <taxon>Muroidea</taxon>
        <taxon>Muridae</taxon>
        <taxon>Murinae</taxon>
        <taxon>Rattus</taxon>
    </lineage>
</organism>
<evidence type="ECO:0000250" key="1"/>
<evidence type="ECO:0000303" key="2">
    <source>
    </source>
</evidence>
<evidence type="ECO:0000305" key="3"/>
<name>DPCD_RAT</name>
<comment type="function">
    <text evidence="1">May play a role in the formation or function of ciliated cells.</text>
</comment>
<comment type="alternative products">
    <event type="alternative splicing"/>
    <isoform>
        <id>Q6AYM4-1</id>
        <name>1</name>
        <sequence type="displayed"/>
    </isoform>
    <isoform>
        <id>Q6AYM4-2</id>
        <name>2</name>
        <sequence type="described" ref="VSP_032083"/>
    </isoform>
</comment>
<comment type="similarity">
    <text evidence="3">Belongs to the DPCD family.</text>
</comment>
<accession>Q6AYM4</accession>
<proteinExistence type="evidence at transcript level"/>
<sequence length="203" mass="23155">MAVTSWLEILRSAEKTALLQDGKRMVHYLFPDGKEMAEEYDEKTSELLVRKWRVKNALGALGQWQLEVGEPMPSGAGSLGSELIKESNANPIFMRKDTKTSFQWRIRNLPYPKDVYSVSVAQKERCVIVRTTNKKYYKKFSIPDLDRHQLPLEDSALSFAHANCTLIISYQKPKEVMAAESELQKELKKVKTAHSSDGDCKTQ</sequence>
<protein>
    <recommendedName>
        <fullName>Protein DPCD</fullName>
    </recommendedName>
</protein>
<dbReference type="EMBL" id="AABR03000057">
    <property type="status" value="NOT_ANNOTATED_CDS"/>
    <property type="molecule type" value="Genomic_DNA"/>
</dbReference>
<dbReference type="EMBL" id="AABR03007566">
    <property type="status" value="NOT_ANNOTATED_CDS"/>
    <property type="molecule type" value="Genomic_DNA"/>
</dbReference>
<dbReference type="EMBL" id="AABR03011265">
    <property type="status" value="NOT_ANNOTATED_CDS"/>
    <property type="molecule type" value="Genomic_DNA"/>
</dbReference>
<dbReference type="EMBL" id="AABR03004155">
    <property type="status" value="NOT_ANNOTATED_CDS"/>
    <property type="molecule type" value="Genomic_DNA"/>
</dbReference>
<dbReference type="EMBL" id="BC078988">
    <property type="protein sequence ID" value="AAH78988.1"/>
    <property type="molecule type" value="mRNA"/>
</dbReference>
<dbReference type="RefSeq" id="NP_001013927.1">
    <molecule id="Q6AYM4-2"/>
    <property type="nucleotide sequence ID" value="NM_001013905.2"/>
</dbReference>
<dbReference type="RefSeq" id="NP_001385717.1">
    <molecule id="Q6AYM4-1"/>
    <property type="nucleotide sequence ID" value="NM_001398788.1"/>
</dbReference>
<dbReference type="RefSeq" id="XP_006231512.1">
    <property type="nucleotide sequence ID" value="XM_006231450.3"/>
</dbReference>
<dbReference type="RefSeq" id="XP_063143247.1">
    <molecule id="Q6AYM4-2"/>
    <property type="nucleotide sequence ID" value="XM_063287177.1"/>
</dbReference>
<dbReference type="FunCoup" id="Q6AYM4">
    <property type="interactions" value="1904"/>
</dbReference>
<dbReference type="STRING" id="10116.ENSRNOP00000023278"/>
<dbReference type="PhosphoSitePlus" id="Q6AYM4"/>
<dbReference type="PaxDb" id="10116-ENSRNOP00000023278"/>
<dbReference type="GeneID" id="294004"/>
<dbReference type="KEGG" id="rno:294004"/>
<dbReference type="AGR" id="RGD:1307648"/>
<dbReference type="CTD" id="25911"/>
<dbReference type="RGD" id="1307648">
    <property type="gene designation" value="Dpcd"/>
</dbReference>
<dbReference type="VEuPathDB" id="HostDB:ENSRNOG00000017241"/>
<dbReference type="eggNOG" id="ENOG502QUNA">
    <property type="taxonomic scope" value="Eukaryota"/>
</dbReference>
<dbReference type="HOGENOM" id="CLU_097313_0_0_1"/>
<dbReference type="InParanoid" id="Q6AYM4"/>
<dbReference type="PhylomeDB" id="Q6AYM4"/>
<dbReference type="TreeFam" id="TF324098"/>
<dbReference type="PRO" id="PR:Q6AYM4"/>
<dbReference type="Proteomes" id="UP000002494">
    <property type="component" value="Chromosome 1"/>
</dbReference>
<dbReference type="Bgee" id="ENSRNOG00000017241">
    <property type="expression patterns" value="Expressed in frontal cortex and 20 other cell types or tissues"/>
</dbReference>
<dbReference type="GO" id="GO:0005576">
    <property type="term" value="C:extracellular region"/>
    <property type="evidence" value="ECO:0007669"/>
    <property type="project" value="GOC"/>
</dbReference>
<dbReference type="GO" id="GO:0007368">
    <property type="term" value="P:determination of left/right symmetry"/>
    <property type="evidence" value="ECO:0000266"/>
    <property type="project" value="RGD"/>
</dbReference>
<dbReference type="GO" id="GO:0003351">
    <property type="term" value="P:epithelial cilium movement involved in extracellular fluid movement"/>
    <property type="evidence" value="ECO:0000266"/>
    <property type="project" value="RGD"/>
</dbReference>
<dbReference type="GO" id="GO:0051649">
    <property type="term" value="P:establishment of localization in cell"/>
    <property type="evidence" value="ECO:0000266"/>
    <property type="project" value="RGD"/>
</dbReference>
<dbReference type="GO" id="GO:0030317">
    <property type="term" value="P:flagellated sperm motility"/>
    <property type="evidence" value="ECO:0000266"/>
    <property type="project" value="RGD"/>
</dbReference>
<dbReference type="GO" id="GO:0021670">
    <property type="term" value="P:lateral ventricle development"/>
    <property type="evidence" value="ECO:0000266"/>
    <property type="project" value="RGD"/>
</dbReference>
<dbReference type="GO" id="GO:0060972">
    <property type="term" value="P:left/right pattern formation"/>
    <property type="evidence" value="ECO:0000266"/>
    <property type="project" value="RGD"/>
</dbReference>
<dbReference type="GO" id="GO:0007283">
    <property type="term" value="P:spermatogenesis"/>
    <property type="evidence" value="ECO:0000266"/>
    <property type="project" value="RGD"/>
</dbReference>
<dbReference type="GO" id="GO:0021678">
    <property type="term" value="P:third ventricle development"/>
    <property type="evidence" value="ECO:0000266"/>
    <property type="project" value="RGD"/>
</dbReference>
<dbReference type="GO" id="GO:0021591">
    <property type="term" value="P:ventricular system development"/>
    <property type="evidence" value="ECO:0000266"/>
    <property type="project" value="RGD"/>
</dbReference>
<dbReference type="InterPro" id="IPR026224">
    <property type="entry name" value="DPCD"/>
</dbReference>
<dbReference type="PANTHER" id="PTHR31921">
    <property type="entry name" value="PROTEIN DPCD"/>
    <property type="match status" value="1"/>
</dbReference>
<dbReference type="PANTHER" id="PTHR31921:SF1">
    <property type="entry name" value="PROTEIN DPCD"/>
    <property type="match status" value="1"/>
</dbReference>
<dbReference type="Pfam" id="PF14913">
    <property type="entry name" value="DPCD"/>
    <property type="match status" value="1"/>
</dbReference>
<dbReference type="PRINTS" id="PR02065">
    <property type="entry name" value="PROTEINDPCD"/>
</dbReference>
<gene>
    <name type="primary">Dpcd</name>
</gene>